<reference key="1">
    <citation type="submission" date="2003-09" db="EMBL/GenBank/DDBJ databases">
        <title>Molecular evolution of the iron sulfur protein and subunit 9 of complex III of the electron transport chain in primates.</title>
        <authorList>
            <person name="Doan J.W."/>
            <person name="Wildman D.E."/>
            <person name="Schmidt T.R."/>
            <person name="Weiss M.L."/>
            <person name="Goodman M."/>
            <person name="Grossman L.I."/>
        </authorList>
    </citation>
    <scope>NUCLEOTIDE SEQUENCE [GENOMIC DNA]</scope>
</reference>
<feature type="chain" id="PRO_0000307239" description="Cytochrome b-c1 complex subunit 9" evidence="5">
    <location>
        <begin position="1"/>
        <end position="78"/>
    </location>
</feature>
<feature type="chain" id="PRO_0000030662" description="Cytochrome b-c1 complex subunit Rieske, mitochondrial">
    <location>
        <begin position="79"/>
        <end position="274"/>
    </location>
</feature>
<feature type="topological domain" description="Mitochondrial matrix" evidence="2">
    <location>
        <begin position="79"/>
        <end position="103"/>
    </location>
</feature>
<feature type="transmembrane region" description="Helical" evidence="2">
    <location>
        <begin position="104"/>
        <end position="140"/>
    </location>
</feature>
<feature type="topological domain" description="Mitochondrial intermembrane" evidence="2">
    <location>
        <begin position="141"/>
        <end position="274"/>
    </location>
</feature>
<feature type="domain" description="Rieske" evidence="6">
    <location>
        <begin position="187"/>
        <end position="272"/>
    </location>
</feature>
<feature type="binding site" evidence="2">
    <location>
        <position position="217"/>
    </location>
    <ligand>
        <name>[2Fe-2S] cluster</name>
        <dbReference type="ChEBI" id="CHEBI:190135"/>
    </ligand>
</feature>
<feature type="binding site" evidence="2">
    <location>
        <position position="219"/>
    </location>
    <ligand>
        <name>[2Fe-2S] cluster</name>
        <dbReference type="ChEBI" id="CHEBI:190135"/>
    </ligand>
</feature>
<feature type="binding site" evidence="2">
    <location>
        <position position="236"/>
    </location>
    <ligand>
        <name>[2Fe-2S] cluster</name>
        <dbReference type="ChEBI" id="CHEBI:190135"/>
    </ligand>
</feature>
<feature type="binding site" evidence="2">
    <location>
        <position position="239"/>
    </location>
    <ligand>
        <name>[2Fe-2S] cluster</name>
        <dbReference type="ChEBI" id="CHEBI:190135"/>
    </ligand>
</feature>
<feature type="binding site" evidence="2">
    <location>
        <position position="241"/>
    </location>
    <ligand>
        <name>[2Fe-2S] cluster</name>
        <dbReference type="ChEBI" id="CHEBI:190135"/>
    </ligand>
</feature>
<feature type="disulfide bond" evidence="2">
    <location>
        <begin position="222"/>
        <end position="238"/>
    </location>
</feature>
<protein>
    <recommendedName>
        <fullName>Cytochrome b-c1 complex subunit Rieske, mitochondrial</fullName>
        <ecNumber>7.1.1.8</ecNumber>
    </recommendedName>
    <alternativeName>
        <fullName>Complex III subunit 5</fullName>
    </alternativeName>
    <alternativeName>
        <fullName>Cytochrome b-c1 complex subunit 5</fullName>
    </alternativeName>
    <alternativeName>
        <fullName>Rieske iron-sulfur protein</fullName>
        <shortName>RISP</shortName>
    </alternativeName>
    <alternativeName>
        <fullName evidence="7">Rieske protein UQCRFS1</fullName>
    </alternativeName>
    <alternativeName>
        <fullName>Ubiquinol-cytochrome c reductase iron-sulfur subunit</fullName>
    </alternativeName>
    <component>
        <recommendedName>
            <fullName evidence="2">Cytochrome b-c1 complex subunit 9</fullName>
            <shortName evidence="2">Su9</shortName>
            <shortName evidence="2">Subunit 9</shortName>
        </recommendedName>
        <alternativeName>
            <fullName evidence="2">8 kDa subunit 9</fullName>
        </alternativeName>
        <alternativeName>
            <fullName>Complex III subunit IX</fullName>
        </alternativeName>
        <alternativeName>
            <fullName>Cytochrome b-c1 complex subunit 11</fullName>
        </alternativeName>
        <alternativeName>
            <fullName>UQCRFS1 mitochondrial targeting sequence</fullName>
            <shortName>UQCRFS1 MTS</shortName>
        </alternativeName>
        <alternativeName>
            <fullName evidence="2">Ubiquinol-cytochrome c reductase 8 kDa protein</fullName>
        </alternativeName>
    </component>
</protein>
<dbReference type="EC" id="7.1.1.8"/>
<dbReference type="EMBL" id="AY387508">
    <property type="protein sequence ID" value="AAR32736.1"/>
    <property type="molecule type" value="Genomic_DNA"/>
</dbReference>
<dbReference type="EMBL" id="AY387507">
    <property type="protein sequence ID" value="AAR32736.1"/>
    <property type="status" value="JOINED"/>
    <property type="molecule type" value="Genomic_DNA"/>
</dbReference>
<dbReference type="SMR" id="Q69BK0"/>
<dbReference type="GO" id="GO:0005743">
    <property type="term" value="C:mitochondrial inner membrane"/>
    <property type="evidence" value="ECO:0007669"/>
    <property type="project" value="UniProtKB-SubCell"/>
</dbReference>
<dbReference type="GO" id="GO:0051537">
    <property type="term" value="F:2 iron, 2 sulfur cluster binding"/>
    <property type="evidence" value="ECO:0007669"/>
    <property type="project" value="UniProtKB-KW"/>
</dbReference>
<dbReference type="GO" id="GO:0046872">
    <property type="term" value="F:metal ion binding"/>
    <property type="evidence" value="ECO:0007669"/>
    <property type="project" value="UniProtKB-KW"/>
</dbReference>
<dbReference type="GO" id="GO:0008121">
    <property type="term" value="F:ubiquinol-cytochrome-c reductase activity"/>
    <property type="evidence" value="ECO:0007669"/>
    <property type="project" value="UniProtKB-EC"/>
</dbReference>
<dbReference type="CDD" id="cd03470">
    <property type="entry name" value="Rieske_cytochrome_bc1"/>
    <property type="match status" value="1"/>
</dbReference>
<dbReference type="FunFam" id="1.20.5.270:FF:000001">
    <property type="entry name" value="Cytochrome b-c1 complex subunit Rieske, mitochondrial"/>
    <property type="match status" value="1"/>
</dbReference>
<dbReference type="FunFam" id="2.10.210.10:FF:000001">
    <property type="entry name" value="Cytochrome b-c1 complex subunit Rieske, mitochondrial"/>
    <property type="match status" value="1"/>
</dbReference>
<dbReference type="FunFam" id="2.102.10.10:FF:000001">
    <property type="entry name" value="Cytochrome b-c1 complex subunit Rieske, mitochondrial"/>
    <property type="match status" value="1"/>
</dbReference>
<dbReference type="Gene3D" id="2.10.210.10">
    <property type="entry name" value="Cytochrome Bc1 Complex, Chain I"/>
    <property type="match status" value="1"/>
</dbReference>
<dbReference type="Gene3D" id="2.102.10.10">
    <property type="entry name" value="Rieske [2Fe-2S] iron-sulphur domain"/>
    <property type="match status" value="1"/>
</dbReference>
<dbReference type="Gene3D" id="1.20.5.270">
    <property type="entry name" value="Ubiquinol cytochrome reductase, transmembrane domain"/>
    <property type="match status" value="1"/>
</dbReference>
<dbReference type="InterPro" id="IPR037008">
    <property type="entry name" value="bc1_Rieske_TM_sf"/>
</dbReference>
<dbReference type="InterPro" id="IPR011070">
    <property type="entry name" value="Globular_prot_asu/bsu"/>
</dbReference>
<dbReference type="InterPro" id="IPR017941">
    <property type="entry name" value="Rieske_2Fe-2S"/>
</dbReference>
<dbReference type="InterPro" id="IPR036922">
    <property type="entry name" value="Rieske_2Fe-2S_sf"/>
</dbReference>
<dbReference type="InterPro" id="IPR014349">
    <property type="entry name" value="Rieske_Fe-S_prot"/>
</dbReference>
<dbReference type="InterPro" id="IPR005805">
    <property type="entry name" value="Rieske_Fe-S_prot_C"/>
</dbReference>
<dbReference type="InterPro" id="IPR004192">
    <property type="entry name" value="Rieske_TM"/>
</dbReference>
<dbReference type="InterPro" id="IPR006317">
    <property type="entry name" value="Ubiquinol_cyt_c_Rdtase_Fe-S-su"/>
</dbReference>
<dbReference type="InterPro" id="IPR015248">
    <property type="entry name" value="UQCRFS1_N"/>
</dbReference>
<dbReference type="NCBIfam" id="TIGR01416">
    <property type="entry name" value="Rieske_proteo"/>
    <property type="match status" value="1"/>
</dbReference>
<dbReference type="PANTHER" id="PTHR10134">
    <property type="entry name" value="CYTOCHROME B-C1 COMPLEX SUBUNIT RIESKE, MITOCHONDRIAL"/>
    <property type="match status" value="1"/>
</dbReference>
<dbReference type="Pfam" id="PF00355">
    <property type="entry name" value="Rieske"/>
    <property type="match status" value="1"/>
</dbReference>
<dbReference type="Pfam" id="PF09165">
    <property type="entry name" value="Ubiq-Cytc-red_N"/>
    <property type="match status" value="1"/>
</dbReference>
<dbReference type="Pfam" id="PF02921">
    <property type="entry name" value="UCR_TM"/>
    <property type="match status" value="1"/>
</dbReference>
<dbReference type="PRINTS" id="PR00162">
    <property type="entry name" value="RIESKE"/>
</dbReference>
<dbReference type="SUPFAM" id="SSF50022">
    <property type="entry name" value="ISP domain"/>
    <property type="match status" value="1"/>
</dbReference>
<dbReference type="SUPFAM" id="SSF81502">
    <property type="entry name" value="ISP transmembrane anchor"/>
    <property type="match status" value="1"/>
</dbReference>
<dbReference type="SUPFAM" id="SSF56568">
    <property type="entry name" value="Non-globular alpha+beta subunits of globular proteins"/>
    <property type="match status" value="1"/>
</dbReference>
<dbReference type="PROSITE" id="PS51296">
    <property type="entry name" value="RIESKE"/>
    <property type="match status" value="1"/>
</dbReference>
<proteinExistence type="inferred from homology"/>
<keyword id="KW-0001">2Fe-2S</keyword>
<keyword id="KW-1015">Disulfide bond</keyword>
<keyword id="KW-0249">Electron transport</keyword>
<keyword id="KW-0408">Iron</keyword>
<keyword id="KW-0411">Iron-sulfur</keyword>
<keyword id="KW-0472">Membrane</keyword>
<keyword id="KW-0479">Metal-binding</keyword>
<keyword id="KW-0496">Mitochondrion</keyword>
<keyword id="KW-0999">Mitochondrion inner membrane</keyword>
<keyword id="KW-0679">Respiratory chain</keyword>
<keyword id="KW-0809">Transit peptide</keyword>
<keyword id="KW-1278">Translocase</keyword>
<keyword id="KW-0812">Transmembrane</keyword>
<keyword id="KW-1133">Transmembrane helix</keyword>
<keyword id="KW-0813">Transport</keyword>
<evidence type="ECO:0000250" key="1">
    <source>
        <dbReference type="UniProtKB" id="P08067"/>
    </source>
</evidence>
<evidence type="ECO:0000250" key="2">
    <source>
        <dbReference type="UniProtKB" id="P13272"/>
    </source>
</evidence>
<evidence type="ECO:0000250" key="3">
    <source>
        <dbReference type="UniProtKB" id="P47985"/>
    </source>
</evidence>
<evidence type="ECO:0000250" key="4">
    <source>
        <dbReference type="UniProtKB" id="Q5ZLR5"/>
    </source>
</evidence>
<evidence type="ECO:0000250" key="5">
    <source>
        <dbReference type="UniProtKB" id="Q9CR68"/>
    </source>
</evidence>
<evidence type="ECO:0000255" key="6">
    <source>
        <dbReference type="PROSITE-ProRule" id="PRU00628"/>
    </source>
</evidence>
<evidence type="ECO:0000305" key="7"/>
<gene>
    <name type="primary">UQCRFS1</name>
</gene>
<organism>
    <name type="scientific">Colobus polykomos</name>
    <name type="common">Western black-and-white colobus monkey</name>
    <dbReference type="NCBI Taxonomy" id="9572"/>
    <lineage>
        <taxon>Eukaryota</taxon>
        <taxon>Metazoa</taxon>
        <taxon>Chordata</taxon>
        <taxon>Craniata</taxon>
        <taxon>Vertebrata</taxon>
        <taxon>Euteleostomi</taxon>
        <taxon>Mammalia</taxon>
        <taxon>Eutheria</taxon>
        <taxon>Euarchontoglires</taxon>
        <taxon>Primates</taxon>
        <taxon>Haplorrhini</taxon>
        <taxon>Catarrhini</taxon>
        <taxon>Cercopithecidae</taxon>
        <taxon>Colobinae</taxon>
        <taxon>Colobus</taxon>
    </lineage>
</organism>
<name>UCRI_COLPO</name>
<comment type="function">
    <molecule>Cytochrome b-c1 complex subunit Rieske, mitochondrial</molecule>
    <text evidence="1 3">Component of the ubiquinol-cytochrome c oxidoreductase, a multisubunit transmembrane complex that is part of the mitochondrial electron transport chain which drives oxidative phosphorylation. The respiratory chain contains 3 multisubunit complexes succinate dehydrogenase (complex II, CII), ubiquinol-cytochrome c oxidoreductase (cytochrome b-c1 complex, complex III, CIII) and cytochrome c oxidase (complex IV, CIV), that cooperate to transfer electrons derived from NADH and succinate to molecular oxygen, creating an electrochemical gradient over the inner membrane that drives transmembrane transport and the ATP synthase. The cytochrome b-c1 complex catalyzes electron transfer from ubiquinol to cytochrome c, linking this redox reaction to translocation of protons across the mitochondrial inner membrane, with protons being carried across the membrane as hydrogens on the quinol. In the process called Q cycle, 2 protons are consumed from the matrix, 4 protons are released into the intermembrane space and 2 electrons are passed to cytochrome c. The Rieske protein is a catalytic core subunit containing a [2Fe-2S] iron-sulfur cluster. It cycles between 2 conformational states during catalysis to transfer electrons from the quinol bound in the Q(0) site in cytochrome b to cytochrome c1 (By similarity). Incorporation of UQCRFS1 is the penultimate step in complex III assembly (By similarity).</text>
</comment>
<comment type="function">
    <molecule>Cytochrome b-c1 complex subunit 9</molecule>
    <text evidence="2 3 5">Component of the ubiquinol-cytochrome c oxidoreductase (cytochrome b-c1 complex, complex III, CIII). UQCRFS1 undergoes proteolytic processing once it is incorporated in the complex III dimer. One of the fragments, called subunit 9, corresponds to its mitochondrial targeting sequence (MTS) (By similarity). The proteolytic processing is necessary for the correct insertion of UQCRFS1 in the complex III dimer, but the persistence of UQCRFS1-derived fragments may prevent newly imported UQCRFS1 to be processed and assembled into complex III and is detrimental for the complex III structure and function (By similarity).</text>
</comment>
<comment type="catalytic activity">
    <reaction evidence="1">
        <text>a quinol + 2 Fe(III)-[cytochrome c](out) = a quinone + 2 Fe(II)-[cytochrome c](out) + 2 H(+)(out)</text>
        <dbReference type="Rhea" id="RHEA:11484"/>
        <dbReference type="Rhea" id="RHEA-COMP:10350"/>
        <dbReference type="Rhea" id="RHEA-COMP:14399"/>
        <dbReference type="ChEBI" id="CHEBI:15378"/>
        <dbReference type="ChEBI" id="CHEBI:24646"/>
        <dbReference type="ChEBI" id="CHEBI:29033"/>
        <dbReference type="ChEBI" id="CHEBI:29034"/>
        <dbReference type="ChEBI" id="CHEBI:132124"/>
        <dbReference type="EC" id="7.1.1.8"/>
    </reaction>
</comment>
<comment type="cofactor">
    <cofactor evidence="6">
        <name>[2Fe-2S] cluster</name>
        <dbReference type="ChEBI" id="CHEBI:190135"/>
    </cofactor>
    <text evidence="3 6">Binds 1 [2Fe-2S] cluster per subunit. Fe-S cluster delivery to the Rieske protein is mediated by components of the iron sulfur (Fe-S) cluster assembly machinery that reside in the mitochondrial matrix (including HSC20 and LYRM7) (By similarity).</text>
</comment>
<comment type="subunit">
    <molecule>Cytochrome b-c1 complex subunit Rieske, mitochondrial</molecule>
    <text evidence="2 3">Component of the ubiquinol-cytochrome c oxidoreductase (cytochrome b-c1 complex, complex III, CIII), a multisubunit enzyme composed of 11 subunits. The complex is composed of 3 respiratory subunits cytochrome b, cytochrome c1 and Rieske protein UQCRFS1, 2 core protein subunits UQCRC1/QCR1 and UQCRC2/QCR2, and 6 low-molecular weight protein subunits UQCRH/QCR6, UQCRB/QCR7, UQCRQ/QCR8, UQCR10/QCR9, UQCR11/QCR10 and subunit 9, the cleavage product of Rieske protein UQCRFS1. The complex exists as an obligatory dimer and forms supercomplexes (SCs) in the inner mitochondrial membrane with NADH-ubiquinone oxidoreductase (complex I, CI) and cytochrome c oxidase (complex IV, CIV), resulting in different assemblies (supercomplex SCI(1)III(2)IV(1) and megacomplex MCI(2)III(2)IV(2)) (By similarity). Incorporation of the Rieske protein UQCRFS1 is the penultimate step in complex III assembly. Interacts with TTC19, which is involved in the clearance of UQCRFS1 fragments (By similarity).</text>
</comment>
<comment type="subunit">
    <molecule>Cytochrome b-c1 complex subunit 9</molecule>
    <text evidence="2">Component of the ubiquinol-cytochrome c oxidoreductase (cytochrome b-c1 complex, complex III, CIII). Subunit 9 corresponds to the mitochondrial targeting sequence (MTS) of Rieske protein UQCRFS1. It is retained after processing and incorporated inside complex III, where it remains bound to the complex and localizes between the 2 core subunits UQCRC1/QCR1 and UQCRC2/QCR2.</text>
</comment>
<comment type="subcellular location">
    <subcellularLocation>
        <location evidence="4">Mitochondrion inner membrane</location>
        <topology evidence="4">Single-pass membrane protein</topology>
    </subcellularLocation>
</comment>
<comment type="PTM">
    <text evidence="5">Proteolytic processing is necessary for the correct insertion of UQCRFS1 in the complex III dimer. Several fragments are generated during UQCRFS1 insertion, most probably due to the endogenous matrix-processing peptidase (MPP) activity of the 2 core protein subunits UQCRC1/QCR1 and UQCRC2/QCR2, which are homologous to the 2 mitochondrial-processing peptidase (MPP) subunits beta-MPP and alpha-MPP respectively. The action of the protease is also necessary for the clearance of the UQCRFS1 fragments.</text>
</comment>
<comment type="miscellaneous">
    <text>The Rieske protein is a high potential 2Fe-2S protein.</text>
</comment>
<comment type="similarity">
    <text evidence="7">Belongs to the Rieske iron-sulfur protein family.</text>
</comment>
<comment type="caution">
    <text evidence="2 3">Several peptides are generated during UQCRFS1 insertion. According to some authors, the identification of the transit peptide as the subunit 9, does not necessary imply that it must be considered as a structural subunit of the complex III dimer as additional fragments from UQCRFS1 are also present.</text>
</comment>
<sequence length="274" mass="29605">MLSVAARSGPFAPVLSATSRGVAGALRPLVQAAVPATSEPPVLDLKRPFLSRESLSGQAVRRPLVASVGLNVPASVCYSHTDVKVPDFCDYRRPEVLDSTKSSRESSEARKSFSYMVTAVTTVGVAYAAKNAVTQFVSSMSASADVLAMAKIEVKLSDIPEGKNMAFKWRGKPLFVRHRTQKEIEQEAAVELSQLRDPQHDLDRVKKPEWVILIGVCTHLGCVPIANAGDFGGYYCPCHGSHYDASGRIRLGPAPLNLEVPTYEFTSDDMVVVG</sequence>
<accession>Q69BK0</accession>